<feature type="peptide" id="PRO_0000020624" description="Acanthoscurrin-2">
    <location>
        <begin position="1" status="less than"/>
        <end position="130"/>
    </location>
</feature>
<feature type="modified residue" description="Lysine amide" evidence="1">
    <location>
        <position position="130"/>
    </location>
</feature>
<feature type="non-terminal residue" evidence="4">
    <location>
        <position position="1"/>
    </location>
</feature>
<proteinExistence type="evidence at protein level"/>
<reference evidence="3 4" key="1">
    <citation type="journal article" date="2003" name="Dev. Comp. Immunol.">
        <title>Acanthoscurrin: a novel glycine-rich antimicrobial peptide constitutively expressed in the hemocytes of the spider Acanthoscurria gomesiana.</title>
        <authorList>
            <person name="Lorenzini D.M."/>
            <person name="da Silva P.I. Jr."/>
            <person name="Fogaca A.C."/>
            <person name="Bulet P."/>
            <person name="Daffre S."/>
        </authorList>
    </citation>
    <scope>NUCLEOTIDE SEQUENCE [MRNA]</scope>
    <scope>PROTEIN SEQUENCE OF 1-63</scope>
    <scope>FUNCTION</scope>
    <scope>SUBCELLULAR LOCATION</scope>
    <scope>TISSUE SPECIFICITY</scope>
    <scope>MASS SPECTROMETRY</scope>
    <scope>AMIDATION AT LYS-130</scope>
    <source>
        <tissue evidence="1">Hemocyte</tissue>
    </source>
</reference>
<protein>
    <recommendedName>
        <fullName evidence="2">Acanthoscurrin-2</fullName>
    </recommendedName>
</protein>
<name>ACN2_ACAGO</name>
<gene>
    <name evidence="4" type="primary">acantho2</name>
</gene>
<keyword id="KW-0027">Amidation</keyword>
<keyword id="KW-0044">Antibiotic</keyword>
<keyword id="KW-0929">Antimicrobial</keyword>
<keyword id="KW-0903">Direct protein sequencing</keyword>
<keyword id="KW-0295">Fungicide</keyword>
<keyword id="KW-0391">Immunity</keyword>
<keyword id="KW-0399">Innate immunity</keyword>
<keyword id="KW-0964">Secreted</keyword>
<evidence type="ECO:0000269" key="1">
    <source>
    </source>
</evidence>
<evidence type="ECO:0000303" key="2">
    <source>
    </source>
</evidence>
<evidence type="ECO:0000305" key="3"/>
<evidence type="ECO:0000312" key="4">
    <source>
        <dbReference type="EMBL" id="CAD48604.1"/>
    </source>
</evidence>
<dbReference type="EMBL" id="AJ508926">
    <property type="protein sequence ID" value="CAD48604.1"/>
    <property type="molecule type" value="mRNA"/>
</dbReference>
<dbReference type="GO" id="GO:0005576">
    <property type="term" value="C:extracellular region"/>
    <property type="evidence" value="ECO:0000314"/>
    <property type="project" value="UniProtKB"/>
</dbReference>
<dbReference type="GO" id="GO:0019731">
    <property type="term" value="P:antibacterial humoral response"/>
    <property type="evidence" value="ECO:0000314"/>
    <property type="project" value="UniProtKB"/>
</dbReference>
<dbReference type="GO" id="GO:0019732">
    <property type="term" value="P:antifungal humoral response"/>
    <property type="evidence" value="ECO:0000314"/>
    <property type="project" value="UniProtKB"/>
</dbReference>
<dbReference type="GO" id="GO:0045087">
    <property type="term" value="P:innate immune response"/>
    <property type="evidence" value="ECO:0007669"/>
    <property type="project" value="UniProtKB-KW"/>
</dbReference>
<dbReference type="GO" id="GO:0031640">
    <property type="term" value="P:killing of cells of another organism"/>
    <property type="evidence" value="ECO:0007669"/>
    <property type="project" value="UniProtKB-KW"/>
</dbReference>
<organism>
    <name type="scientific">Acanthoscurria gomesiana</name>
    <name type="common">Tarantula spider</name>
    <name type="synonym">Phormictopus pheopygus</name>
    <dbReference type="NCBI Taxonomy" id="115339"/>
    <lineage>
        <taxon>Eukaryota</taxon>
        <taxon>Metazoa</taxon>
        <taxon>Ecdysozoa</taxon>
        <taxon>Arthropoda</taxon>
        <taxon>Chelicerata</taxon>
        <taxon>Arachnida</taxon>
        <taxon>Araneae</taxon>
        <taxon>Mygalomorphae</taxon>
        <taxon>Theraphosidae</taxon>
        <taxon>Acanthoscurria</taxon>
    </lineage>
</organism>
<sequence length="131" mass="10169">DVYKGGGGGRYGGGRYGGGGGYGGGLGGGGLGGGGLGGGKGLGGGGLGGGGLGGGGLGGGGLGGGKGLGGGGLGGGGLGGGGLGGGGLGGGKGLGGGGLGGGGLGGGRGGYGGGGYGGGYGGGYGGGKYKG</sequence>
<comment type="function">
    <text evidence="1">Antimicrobial protein. Strong activity against the Gram-negative bacterium E.coli SBS363 and yeast C.albicans. No detectable activity against the Gram-positive bacterium M.luteus.</text>
</comment>
<comment type="subcellular location">
    <subcellularLocation>
        <location evidence="1">Secreted</location>
    </subcellularLocation>
</comment>
<comment type="tissue specificity">
    <text evidence="1">Expressed in hemocytes and secreted into the plasma following bacterial immune challenge.</text>
</comment>
<comment type="mass spectrometry" mass="10111.0" method="Electrospray" evidence="1"/>
<comment type="similarity">
    <text evidence="3">Belongs to the glycine-rich peptide family.</text>
</comment>
<accession>Q8I6R7</accession>